<sequence>MNWITNYVRPKINSMLGRREMPENLWIKDPESGEMVFHKDLEENQWVVPASGYHIKISAKDRLKHFFDNGAYETLENPKAGVDPLKFRDERRYIDRLRDAKAKTNLDDAVVNAIGRIEGLEILATVQDFAFMGGSLGMAAGEAIVRGFETAVERRLPLVLFAASGGARMQEGILSLMQLPRTTVAVDRLKEAGLPYIVVLTNPTTGGVTASYAMLGDVHIAEPGALIGFAGPRVIEQTIREKLPEGFQRAEYLKEHGMVDMVVSRLEMKATIARLLKILLKEQATEENGSRRLPAPEAAVVEAAVNA</sequence>
<evidence type="ECO:0000255" key="1">
    <source>
        <dbReference type="HAMAP-Rule" id="MF_01395"/>
    </source>
</evidence>
<evidence type="ECO:0000255" key="2">
    <source>
        <dbReference type="PROSITE-ProRule" id="PRU01136"/>
    </source>
</evidence>
<organism>
    <name type="scientific">Chelativorans sp. (strain BNC1)</name>
    <dbReference type="NCBI Taxonomy" id="266779"/>
    <lineage>
        <taxon>Bacteria</taxon>
        <taxon>Pseudomonadati</taxon>
        <taxon>Pseudomonadota</taxon>
        <taxon>Alphaproteobacteria</taxon>
        <taxon>Hyphomicrobiales</taxon>
        <taxon>Phyllobacteriaceae</taxon>
        <taxon>Chelativorans</taxon>
    </lineage>
</organism>
<name>ACCD_CHESB</name>
<proteinExistence type="inferred from homology"/>
<gene>
    <name evidence="1" type="primary">accD</name>
    <name type="ordered locus">Meso_0663</name>
</gene>
<keyword id="KW-0067">ATP-binding</keyword>
<keyword id="KW-0963">Cytoplasm</keyword>
<keyword id="KW-0275">Fatty acid biosynthesis</keyword>
<keyword id="KW-0276">Fatty acid metabolism</keyword>
<keyword id="KW-0444">Lipid biosynthesis</keyword>
<keyword id="KW-0443">Lipid metabolism</keyword>
<keyword id="KW-0547">Nucleotide-binding</keyword>
<keyword id="KW-0808">Transferase</keyword>
<accession>Q11KL2</accession>
<comment type="function">
    <text evidence="1">Component of the acetyl coenzyme A carboxylase (ACC) complex. Biotin carboxylase (BC) catalyzes the carboxylation of biotin on its carrier protein (BCCP) and then the CO(2) group is transferred by the transcarboxylase to acetyl-CoA to form malonyl-CoA.</text>
</comment>
<comment type="catalytic activity">
    <reaction evidence="1">
        <text>N(6)-carboxybiotinyl-L-lysyl-[protein] + acetyl-CoA = N(6)-biotinyl-L-lysyl-[protein] + malonyl-CoA</text>
        <dbReference type="Rhea" id="RHEA:54728"/>
        <dbReference type="Rhea" id="RHEA-COMP:10505"/>
        <dbReference type="Rhea" id="RHEA-COMP:10506"/>
        <dbReference type="ChEBI" id="CHEBI:57288"/>
        <dbReference type="ChEBI" id="CHEBI:57384"/>
        <dbReference type="ChEBI" id="CHEBI:83144"/>
        <dbReference type="ChEBI" id="CHEBI:83145"/>
        <dbReference type="EC" id="2.1.3.15"/>
    </reaction>
</comment>
<comment type="pathway">
    <text evidence="1">Lipid metabolism; malonyl-CoA biosynthesis; malonyl-CoA from acetyl-CoA: step 1/1.</text>
</comment>
<comment type="subunit">
    <text evidence="1">Acetyl-CoA carboxylase is a heterohexamer composed of biotin carboxyl carrier protein (AccB), biotin carboxylase (AccC) and two subunits each of ACCase subunit alpha (AccA) and ACCase subunit beta (AccD).</text>
</comment>
<comment type="subcellular location">
    <subcellularLocation>
        <location evidence="1">Cytoplasm</location>
    </subcellularLocation>
</comment>
<comment type="similarity">
    <text evidence="1">Belongs to the AccD/PCCB family.</text>
</comment>
<reference key="1">
    <citation type="submission" date="2006-06" db="EMBL/GenBank/DDBJ databases">
        <title>Complete sequence of chromosome of Mesorhizobium sp. BNC1.</title>
        <authorList>
            <consortium name="US DOE Joint Genome Institute"/>
            <person name="Copeland A."/>
            <person name="Lucas S."/>
            <person name="Lapidus A."/>
            <person name="Barry K."/>
            <person name="Detter J.C."/>
            <person name="Glavina del Rio T."/>
            <person name="Hammon N."/>
            <person name="Israni S."/>
            <person name="Dalin E."/>
            <person name="Tice H."/>
            <person name="Pitluck S."/>
            <person name="Chertkov O."/>
            <person name="Brettin T."/>
            <person name="Bruce D."/>
            <person name="Han C."/>
            <person name="Tapia R."/>
            <person name="Gilna P."/>
            <person name="Schmutz J."/>
            <person name="Larimer F."/>
            <person name="Land M."/>
            <person name="Hauser L."/>
            <person name="Kyrpides N."/>
            <person name="Mikhailova N."/>
            <person name="Richardson P."/>
        </authorList>
    </citation>
    <scope>NUCLEOTIDE SEQUENCE [LARGE SCALE GENOMIC DNA]</scope>
    <source>
        <strain>BNC1</strain>
    </source>
</reference>
<protein>
    <recommendedName>
        <fullName evidence="1">Acetyl-coenzyme A carboxylase carboxyl transferase subunit beta</fullName>
        <shortName evidence="1">ACCase subunit beta</shortName>
        <shortName evidence="1">Acetyl-CoA carboxylase carboxyltransferase subunit beta</shortName>
        <ecNumber evidence="1">2.1.3.15</ecNumber>
    </recommendedName>
</protein>
<dbReference type="EC" id="2.1.3.15" evidence="1"/>
<dbReference type="EMBL" id="CP000390">
    <property type="protein sequence ID" value="ABG62063.1"/>
    <property type="molecule type" value="Genomic_DNA"/>
</dbReference>
<dbReference type="SMR" id="Q11KL2"/>
<dbReference type="STRING" id="266779.Meso_0663"/>
<dbReference type="KEGG" id="mes:Meso_0663"/>
<dbReference type="eggNOG" id="COG0777">
    <property type="taxonomic scope" value="Bacteria"/>
</dbReference>
<dbReference type="HOGENOM" id="CLU_015486_1_0_5"/>
<dbReference type="OrthoDB" id="9772975at2"/>
<dbReference type="UniPathway" id="UPA00655">
    <property type="reaction ID" value="UER00711"/>
</dbReference>
<dbReference type="GO" id="GO:0009329">
    <property type="term" value="C:acetate CoA-transferase complex"/>
    <property type="evidence" value="ECO:0007669"/>
    <property type="project" value="TreeGrafter"/>
</dbReference>
<dbReference type="GO" id="GO:0003989">
    <property type="term" value="F:acetyl-CoA carboxylase activity"/>
    <property type="evidence" value="ECO:0007669"/>
    <property type="project" value="InterPro"/>
</dbReference>
<dbReference type="GO" id="GO:0005524">
    <property type="term" value="F:ATP binding"/>
    <property type="evidence" value="ECO:0007669"/>
    <property type="project" value="UniProtKB-KW"/>
</dbReference>
<dbReference type="GO" id="GO:0016743">
    <property type="term" value="F:carboxyl- or carbamoyltransferase activity"/>
    <property type="evidence" value="ECO:0007669"/>
    <property type="project" value="UniProtKB-UniRule"/>
</dbReference>
<dbReference type="GO" id="GO:0006633">
    <property type="term" value="P:fatty acid biosynthetic process"/>
    <property type="evidence" value="ECO:0007669"/>
    <property type="project" value="UniProtKB-KW"/>
</dbReference>
<dbReference type="GO" id="GO:2001295">
    <property type="term" value="P:malonyl-CoA biosynthetic process"/>
    <property type="evidence" value="ECO:0007669"/>
    <property type="project" value="UniProtKB-UniRule"/>
</dbReference>
<dbReference type="Gene3D" id="3.90.226.10">
    <property type="entry name" value="2-enoyl-CoA Hydratase, Chain A, domain 1"/>
    <property type="match status" value="1"/>
</dbReference>
<dbReference type="HAMAP" id="MF_01395">
    <property type="entry name" value="AcetylCoA_CT_beta"/>
    <property type="match status" value="1"/>
</dbReference>
<dbReference type="InterPro" id="IPR034733">
    <property type="entry name" value="AcCoA_carboxyl_beta"/>
</dbReference>
<dbReference type="InterPro" id="IPR000438">
    <property type="entry name" value="Acetyl_CoA_COase_Trfase_b_su"/>
</dbReference>
<dbReference type="InterPro" id="IPR029045">
    <property type="entry name" value="ClpP/crotonase-like_dom_sf"/>
</dbReference>
<dbReference type="InterPro" id="IPR011762">
    <property type="entry name" value="COA_CT_N"/>
</dbReference>
<dbReference type="NCBIfam" id="TIGR00515">
    <property type="entry name" value="accD"/>
    <property type="match status" value="1"/>
</dbReference>
<dbReference type="PANTHER" id="PTHR42995">
    <property type="entry name" value="ACETYL-COENZYME A CARBOXYLASE CARBOXYL TRANSFERASE SUBUNIT BETA, CHLOROPLASTIC"/>
    <property type="match status" value="1"/>
</dbReference>
<dbReference type="PANTHER" id="PTHR42995:SF5">
    <property type="entry name" value="ACETYL-COENZYME A CARBOXYLASE CARBOXYL TRANSFERASE SUBUNIT BETA, CHLOROPLASTIC"/>
    <property type="match status" value="1"/>
</dbReference>
<dbReference type="Pfam" id="PF01039">
    <property type="entry name" value="Carboxyl_trans"/>
    <property type="match status" value="1"/>
</dbReference>
<dbReference type="PRINTS" id="PR01070">
    <property type="entry name" value="ACCCTRFRASEB"/>
</dbReference>
<dbReference type="SUPFAM" id="SSF52096">
    <property type="entry name" value="ClpP/crotonase"/>
    <property type="match status" value="1"/>
</dbReference>
<dbReference type="PROSITE" id="PS50980">
    <property type="entry name" value="COA_CT_NTER"/>
    <property type="match status" value="1"/>
</dbReference>
<feature type="chain" id="PRO_0000389791" description="Acetyl-coenzyme A carboxylase carboxyl transferase subunit beta">
    <location>
        <begin position="1"/>
        <end position="307"/>
    </location>
</feature>
<feature type="domain" description="CoA carboxyltransferase N-terminal" evidence="2">
    <location>
        <begin position="25"/>
        <end position="294"/>
    </location>
</feature>